<organism>
    <name type="scientific">Saccharolobus islandicus (strain M.16.4 / Kamchatka #3)</name>
    <name type="common">Sulfolobus islandicus</name>
    <dbReference type="NCBI Taxonomy" id="426118"/>
    <lineage>
        <taxon>Archaea</taxon>
        <taxon>Thermoproteota</taxon>
        <taxon>Thermoprotei</taxon>
        <taxon>Sulfolobales</taxon>
        <taxon>Sulfolobaceae</taxon>
        <taxon>Saccharolobus</taxon>
    </lineage>
</organism>
<proteinExistence type="inferred from homology"/>
<keyword id="KW-0066">ATP synthesis</keyword>
<keyword id="KW-1003">Cell membrane</keyword>
<keyword id="KW-0375">Hydrogen ion transport</keyword>
<keyword id="KW-0406">Ion transport</keyword>
<keyword id="KW-0472">Membrane</keyword>
<keyword id="KW-0813">Transport</keyword>
<evidence type="ECO:0000255" key="1">
    <source>
        <dbReference type="HAMAP-Rule" id="MF_00310"/>
    </source>
</evidence>
<reference key="1">
    <citation type="journal article" date="2009" name="Proc. Natl. Acad. Sci. U.S.A.">
        <title>Biogeography of the Sulfolobus islandicus pan-genome.</title>
        <authorList>
            <person name="Reno M.L."/>
            <person name="Held N.L."/>
            <person name="Fields C.J."/>
            <person name="Burke P.V."/>
            <person name="Whitaker R.J."/>
        </authorList>
    </citation>
    <scope>NUCLEOTIDE SEQUENCE [LARGE SCALE GENOMIC DNA]</scope>
    <source>
        <strain>M.16.4 / Kamchatka #3</strain>
    </source>
</reference>
<gene>
    <name evidence="1" type="primary">atpB</name>
    <name type="ordered locus">M164_1562</name>
</gene>
<feature type="chain" id="PRO_1000205043" description="A-type ATP synthase subunit B">
    <location>
        <begin position="1"/>
        <end position="463"/>
    </location>
</feature>
<name>AATB_SACI6</name>
<comment type="function">
    <text evidence="1">Component of the A-type ATP synthase that produces ATP from ADP in the presence of a proton gradient across the membrane. The B chain is a regulatory subunit.</text>
</comment>
<comment type="subunit">
    <text evidence="1">Has multiple subunits with at least A(3), B(3), C, D, E, F, H, I and proteolipid K(x).</text>
</comment>
<comment type="subcellular location">
    <subcellularLocation>
        <location evidence="1">Cell membrane</location>
        <topology evidence="1">Peripheral membrane protein</topology>
    </subcellularLocation>
</comment>
<comment type="similarity">
    <text evidence="1">Belongs to the ATPase alpha/beta chains family.</text>
</comment>
<accession>C4KHU9</accession>
<protein>
    <recommendedName>
        <fullName evidence="1">A-type ATP synthase subunit B</fullName>
    </recommendedName>
</protein>
<dbReference type="EMBL" id="CP001402">
    <property type="protein sequence ID" value="ACR42163.1"/>
    <property type="molecule type" value="Genomic_DNA"/>
</dbReference>
<dbReference type="RefSeq" id="WP_012711558.1">
    <property type="nucleotide sequence ID" value="NC_012726.1"/>
</dbReference>
<dbReference type="SMR" id="C4KHU9"/>
<dbReference type="KEGG" id="sid:M164_1562"/>
<dbReference type="HOGENOM" id="CLU_022916_0_0_2"/>
<dbReference type="Proteomes" id="UP000001479">
    <property type="component" value="Chromosome"/>
</dbReference>
<dbReference type="GO" id="GO:0005886">
    <property type="term" value="C:plasma membrane"/>
    <property type="evidence" value="ECO:0007669"/>
    <property type="project" value="UniProtKB-SubCell"/>
</dbReference>
<dbReference type="GO" id="GO:0033178">
    <property type="term" value="C:proton-transporting two-sector ATPase complex, catalytic domain"/>
    <property type="evidence" value="ECO:0007669"/>
    <property type="project" value="InterPro"/>
</dbReference>
<dbReference type="GO" id="GO:0005524">
    <property type="term" value="F:ATP binding"/>
    <property type="evidence" value="ECO:0007669"/>
    <property type="project" value="UniProtKB-UniRule"/>
</dbReference>
<dbReference type="GO" id="GO:0046933">
    <property type="term" value="F:proton-transporting ATP synthase activity, rotational mechanism"/>
    <property type="evidence" value="ECO:0007669"/>
    <property type="project" value="UniProtKB-UniRule"/>
</dbReference>
<dbReference type="GO" id="GO:0046961">
    <property type="term" value="F:proton-transporting ATPase activity, rotational mechanism"/>
    <property type="evidence" value="ECO:0007669"/>
    <property type="project" value="TreeGrafter"/>
</dbReference>
<dbReference type="GO" id="GO:0042777">
    <property type="term" value="P:proton motive force-driven plasma membrane ATP synthesis"/>
    <property type="evidence" value="ECO:0007669"/>
    <property type="project" value="UniProtKB-UniRule"/>
</dbReference>
<dbReference type="CDD" id="cd18112">
    <property type="entry name" value="ATP-synt_V_A-type_beta_C"/>
    <property type="match status" value="1"/>
</dbReference>
<dbReference type="CDD" id="cd18118">
    <property type="entry name" value="ATP-synt_V_A-type_beta_N"/>
    <property type="match status" value="1"/>
</dbReference>
<dbReference type="CDD" id="cd01135">
    <property type="entry name" value="V_A-ATPase_B"/>
    <property type="match status" value="1"/>
</dbReference>
<dbReference type="Gene3D" id="3.40.50.12240">
    <property type="match status" value="1"/>
</dbReference>
<dbReference type="HAMAP" id="MF_00310">
    <property type="entry name" value="ATP_synth_B_arch"/>
    <property type="match status" value="1"/>
</dbReference>
<dbReference type="InterPro" id="IPR055190">
    <property type="entry name" value="ATP-synt_VA_C"/>
</dbReference>
<dbReference type="InterPro" id="IPR020003">
    <property type="entry name" value="ATPase_a/bsu_AS"/>
</dbReference>
<dbReference type="InterPro" id="IPR005724">
    <property type="entry name" value="ATPase_A1-cplx_bsu"/>
</dbReference>
<dbReference type="InterPro" id="IPR004100">
    <property type="entry name" value="ATPase_F1/V1/A1_a/bsu_N"/>
</dbReference>
<dbReference type="InterPro" id="IPR000194">
    <property type="entry name" value="ATPase_F1/V1/A1_a/bsu_nucl-bd"/>
</dbReference>
<dbReference type="InterPro" id="IPR027417">
    <property type="entry name" value="P-loop_NTPase"/>
</dbReference>
<dbReference type="InterPro" id="IPR022879">
    <property type="entry name" value="V-ATPase_su_B/beta"/>
</dbReference>
<dbReference type="NCBIfam" id="TIGR01041">
    <property type="entry name" value="ATP_syn_B_arch"/>
    <property type="match status" value="1"/>
</dbReference>
<dbReference type="NCBIfam" id="NF003235">
    <property type="entry name" value="PRK04196.1"/>
    <property type="match status" value="1"/>
</dbReference>
<dbReference type="PANTHER" id="PTHR43389">
    <property type="entry name" value="V-TYPE PROTON ATPASE SUBUNIT B"/>
    <property type="match status" value="1"/>
</dbReference>
<dbReference type="PANTHER" id="PTHR43389:SF4">
    <property type="entry name" value="V-TYPE PROTON ATPASE SUBUNIT B"/>
    <property type="match status" value="1"/>
</dbReference>
<dbReference type="Pfam" id="PF00006">
    <property type="entry name" value="ATP-synt_ab"/>
    <property type="match status" value="1"/>
</dbReference>
<dbReference type="Pfam" id="PF02874">
    <property type="entry name" value="ATP-synt_ab_N"/>
    <property type="match status" value="1"/>
</dbReference>
<dbReference type="Pfam" id="PF22919">
    <property type="entry name" value="ATP-synt_VA_C"/>
    <property type="match status" value="1"/>
</dbReference>
<dbReference type="PIRSF" id="PIRSF039114">
    <property type="entry name" value="V-ATPsynth_beta/V-ATPase_B"/>
    <property type="match status" value="1"/>
</dbReference>
<dbReference type="SUPFAM" id="SSF52540">
    <property type="entry name" value="P-loop containing nucleoside triphosphate hydrolases"/>
    <property type="match status" value="1"/>
</dbReference>
<dbReference type="PROSITE" id="PS00152">
    <property type="entry name" value="ATPASE_ALPHA_BETA"/>
    <property type="match status" value="1"/>
</dbReference>
<sequence>MLSVREFSNISMIKGPLIYVQGVTDASYNELVEIEMPNGEKRRGLVIDSQMGIAIVQVFEGTTGVSPTGTKIRMLGRGLEVKISEEMLGRIFNPLGDSLDNGPPVIKGEKRDINGSPLNPAAREYPEEFIQTGISAIDGLNALLRGQKLPIFSGSGLPANMLAAQIAKQATVRGEESNFAVVFAAIGARYDDALFFRKFFEETGAINRVAMIVSLANEPPVMKTLTPKTALTLAEYLAFEQDMHVLAILIDMTNYCEALREISAAREEVPGRGGYPGYMYTDLATIYERAGKVLGKKGSITQMPILTMPNDDITHPIPDLTGYITEGQIVLDRALYNKGIYPPINVLMSLSRLAKDGIGEGKTRDDHKDVSNQLFASYARAVDTRGLAAIIGEDSLSEVDRKYLLFGELFERKFVSQGFNENRDIETTLDIGWEILSVLPESELTNIKTQYIKKYHPNYRGKK</sequence>